<comment type="function">
    <text evidence="1">Cell wall formation. Catalyzes the transfer of a GlcNAc subunit on undecaprenyl-pyrophosphoryl-MurNAc-pentapeptide (lipid intermediate I) to form undecaprenyl-pyrophosphoryl-MurNAc-(pentapeptide)GlcNAc (lipid intermediate II).</text>
</comment>
<comment type="catalytic activity">
    <reaction evidence="1">
        <text>di-trans,octa-cis-undecaprenyl diphospho-N-acetyl-alpha-D-muramoyl-L-alanyl-D-glutamyl-meso-2,6-diaminopimeloyl-D-alanyl-D-alanine + UDP-N-acetyl-alpha-D-glucosamine = di-trans,octa-cis-undecaprenyl diphospho-[N-acetyl-alpha-D-glucosaminyl-(1-&gt;4)]-N-acetyl-alpha-D-muramoyl-L-alanyl-D-glutamyl-meso-2,6-diaminopimeloyl-D-alanyl-D-alanine + UDP + H(+)</text>
        <dbReference type="Rhea" id="RHEA:31227"/>
        <dbReference type="ChEBI" id="CHEBI:15378"/>
        <dbReference type="ChEBI" id="CHEBI:57705"/>
        <dbReference type="ChEBI" id="CHEBI:58223"/>
        <dbReference type="ChEBI" id="CHEBI:61387"/>
        <dbReference type="ChEBI" id="CHEBI:61388"/>
        <dbReference type="EC" id="2.4.1.227"/>
    </reaction>
</comment>
<comment type="pathway">
    <text evidence="1">Cell wall biogenesis; peptidoglycan biosynthesis.</text>
</comment>
<comment type="subcellular location">
    <subcellularLocation>
        <location evidence="1">Cell inner membrane</location>
        <topology evidence="1">Peripheral membrane protein</topology>
        <orientation evidence="1">Cytoplasmic side</orientation>
    </subcellularLocation>
</comment>
<comment type="similarity">
    <text evidence="1">Belongs to the glycosyltransferase 28 family. MurG subfamily.</text>
</comment>
<accession>Q5WY98</accession>
<gene>
    <name evidence="1" type="primary">murG</name>
    <name type="ordered locus">lpl0841</name>
</gene>
<organism>
    <name type="scientific">Legionella pneumophila (strain Lens)</name>
    <dbReference type="NCBI Taxonomy" id="297245"/>
    <lineage>
        <taxon>Bacteria</taxon>
        <taxon>Pseudomonadati</taxon>
        <taxon>Pseudomonadota</taxon>
        <taxon>Gammaproteobacteria</taxon>
        <taxon>Legionellales</taxon>
        <taxon>Legionellaceae</taxon>
        <taxon>Legionella</taxon>
    </lineage>
</organism>
<protein>
    <recommendedName>
        <fullName evidence="1">UDP-N-acetylglucosamine--N-acetylmuramyl-(pentapeptide) pyrophosphoryl-undecaprenol N-acetylglucosamine transferase</fullName>
        <ecNumber evidence="1">2.4.1.227</ecNumber>
    </recommendedName>
    <alternativeName>
        <fullName evidence="1">Undecaprenyl-PP-MurNAc-pentapeptide-UDPGlcNAc GlcNAc transferase</fullName>
    </alternativeName>
</protein>
<evidence type="ECO:0000255" key="1">
    <source>
        <dbReference type="HAMAP-Rule" id="MF_00033"/>
    </source>
</evidence>
<reference key="1">
    <citation type="journal article" date="2004" name="Nat. Genet.">
        <title>Evidence in the Legionella pneumophila genome for exploitation of host cell functions and high genome plasticity.</title>
        <authorList>
            <person name="Cazalet C."/>
            <person name="Rusniok C."/>
            <person name="Brueggemann H."/>
            <person name="Zidane N."/>
            <person name="Magnier A."/>
            <person name="Ma L."/>
            <person name="Tichit M."/>
            <person name="Jarraud S."/>
            <person name="Bouchier C."/>
            <person name="Vandenesch F."/>
            <person name="Kunst F."/>
            <person name="Etienne J."/>
            <person name="Glaser P."/>
            <person name="Buchrieser C."/>
        </authorList>
    </citation>
    <scope>NUCLEOTIDE SEQUENCE [LARGE SCALE GENOMIC DNA]</scope>
    <source>
        <strain>Lens</strain>
    </source>
</reference>
<name>MURG_LEGPL</name>
<proteinExistence type="inferred from homology"/>
<feature type="chain" id="PRO_0000225063" description="UDP-N-acetylglucosamine--N-acetylmuramyl-(pentapeptide) pyrophosphoryl-undecaprenol N-acetylglucosamine transferase">
    <location>
        <begin position="1"/>
        <end position="363"/>
    </location>
</feature>
<feature type="binding site" evidence="1">
    <location>
        <begin position="12"/>
        <end position="14"/>
    </location>
    <ligand>
        <name>UDP-N-acetyl-alpha-D-glucosamine</name>
        <dbReference type="ChEBI" id="CHEBI:57705"/>
    </ligand>
</feature>
<feature type="binding site" evidence="1">
    <location>
        <position position="166"/>
    </location>
    <ligand>
        <name>UDP-N-acetyl-alpha-D-glucosamine</name>
        <dbReference type="ChEBI" id="CHEBI:57705"/>
    </ligand>
</feature>
<feature type="binding site" evidence="1">
    <location>
        <position position="196"/>
    </location>
    <ligand>
        <name>UDP-N-acetyl-alpha-D-glucosamine</name>
        <dbReference type="ChEBI" id="CHEBI:57705"/>
    </ligand>
</feature>
<feature type="binding site" evidence="1">
    <location>
        <position position="291"/>
    </location>
    <ligand>
        <name>UDP-N-acetyl-alpha-D-glucosamine</name>
        <dbReference type="ChEBI" id="CHEBI:57705"/>
    </ligand>
</feature>
<dbReference type="EC" id="2.4.1.227" evidence="1"/>
<dbReference type="EMBL" id="CR628337">
    <property type="protein sequence ID" value="CAH15075.1"/>
    <property type="molecule type" value="Genomic_DNA"/>
</dbReference>
<dbReference type="RefSeq" id="WP_011215000.1">
    <property type="nucleotide sequence ID" value="NC_006369.1"/>
</dbReference>
<dbReference type="SMR" id="Q5WY98"/>
<dbReference type="CAZy" id="GT28">
    <property type="family name" value="Glycosyltransferase Family 28"/>
</dbReference>
<dbReference type="KEGG" id="lpf:lpl0841"/>
<dbReference type="LegioList" id="lpl0841"/>
<dbReference type="HOGENOM" id="CLU_037404_0_0_6"/>
<dbReference type="UniPathway" id="UPA00219"/>
<dbReference type="Proteomes" id="UP000002517">
    <property type="component" value="Chromosome"/>
</dbReference>
<dbReference type="GO" id="GO:0005886">
    <property type="term" value="C:plasma membrane"/>
    <property type="evidence" value="ECO:0007669"/>
    <property type="project" value="UniProtKB-SubCell"/>
</dbReference>
<dbReference type="GO" id="GO:0051991">
    <property type="term" value="F:UDP-N-acetyl-D-glucosamine:N-acetylmuramoyl-L-alanyl-D-glutamyl-meso-2,6-diaminopimelyl-D-alanyl-D-alanine-diphosphoundecaprenol 4-beta-N-acetylglucosaminlytransferase activity"/>
    <property type="evidence" value="ECO:0007669"/>
    <property type="project" value="RHEA"/>
</dbReference>
<dbReference type="GO" id="GO:0050511">
    <property type="term" value="F:undecaprenyldiphospho-muramoylpentapeptide beta-N-acetylglucosaminyltransferase activity"/>
    <property type="evidence" value="ECO:0007669"/>
    <property type="project" value="UniProtKB-UniRule"/>
</dbReference>
<dbReference type="GO" id="GO:0005975">
    <property type="term" value="P:carbohydrate metabolic process"/>
    <property type="evidence" value="ECO:0007669"/>
    <property type="project" value="InterPro"/>
</dbReference>
<dbReference type="GO" id="GO:0051301">
    <property type="term" value="P:cell division"/>
    <property type="evidence" value="ECO:0007669"/>
    <property type="project" value="UniProtKB-KW"/>
</dbReference>
<dbReference type="GO" id="GO:0071555">
    <property type="term" value="P:cell wall organization"/>
    <property type="evidence" value="ECO:0007669"/>
    <property type="project" value="UniProtKB-KW"/>
</dbReference>
<dbReference type="GO" id="GO:0030259">
    <property type="term" value="P:lipid glycosylation"/>
    <property type="evidence" value="ECO:0007669"/>
    <property type="project" value="UniProtKB-UniRule"/>
</dbReference>
<dbReference type="GO" id="GO:0009252">
    <property type="term" value="P:peptidoglycan biosynthetic process"/>
    <property type="evidence" value="ECO:0007669"/>
    <property type="project" value="UniProtKB-UniRule"/>
</dbReference>
<dbReference type="GO" id="GO:0008360">
    <property type="term" value="P:regulation of cell shape"/>
    <property type="evidence" value="ECO:0007669"/>
    <property type="project" value="UniProtKB-KW"/>
</dbReference>
<dbReference type="CDD" id="cd03785">
    <property type="entry name" value="GT28_MurG"/>
    <property type="match status" value="1"/>
</dbReference>
<dbReference type="Gene3D" id="3.40.50.2000">
    <property type="entry name" value="Glycogen Phosphorylase B"/>
    <property type="match status" value="2"/>
</dbReference>
<dbReference type="HAMAP" id="MF_00033">
    <property type="entry name" value="MurG"/>
    <property type="match status" value="1"/>
</dbReference>
<dbReference type="InterPro" id="IPR006009">
    <property type="entry name" value="GlcNAc_MurG"/>
</dbReference>
<dbReference type="InterPro" id="IPR007235">
    <property type="entry name" value="Glyco_trans_28_C"/>
</dbReference>
<dbReference type="InterPro" id="IPR004276">
    <property type="entry name" value="GlycoTrans_28_N"/>
</dbReference>
<dbReference type="NCBIfam" id="NF009102">
    <property type="entry name" value="PRK12446.1"/>
    <property type="match status" value="1"/>
</dbReference>
<dbReference type="PANTHER" id="PTHR21015:SF27">
    <property type="entry name" value="UDP-N-ACETYLGLUCOSAMINE--N-ACETYLMURAMYL-(PENTAPEPTIDE) PYROPHOSPHORYL-UNDECAPRENOL N-ACETYLGLUCOSAMINE TRANSFERASE"/>
    <property type="match status" value="1"/>
</dbReference>
<dbReference type="PANTHER" id="PTHR21015">
    <property type="entry name" value="UDP-N-ACETYLGLUCOSAMINE--N-ACETYLMURAMYL-(PENTAPEPTIDE) PYROPHOSPHORYL-UNDECAPRENOL N-ACETYLGLUCOSAMINE TRANSFERASE 1"/>
    <property type="match status" value="1"/>
</dbReference>
<dbReference type="Pfam" id="PF04101">
    <property type="entry name" value="Glyco_tran_28_C"/>
    <property type="match status" value="1"/>
</dbReference>
<dbReference type="Pfam" id="PF03033">
    <property type="entry name" value="Glyco_transf_28"/>
    <property type="match status" value="1"/>
</dbReference>
<dbReference type="SUPFAM" id="SSF53756">
    <property type="entry name" value="UDP-Glycosyltransferase/glycogen phosphorylase"/>
    <property type="match status" value="1"/>
</dbReference>
<sequence>MSPSIVFTGGGTAGHVTPNIALIKEFRKEGWNVEYIGSVSGIEKEMIEPLDIPFHGVSSGKLRRYFSLKNLLDPFKIVLGIIQSSLLFYKIKPDVVFSKGGFVAFPVVVGAWLNRIPVVAHESDMSPGLANRLSFPFVNKICLTFDAGKKYFKRQDKIEVTGTPIRQQLLTGNRMKGLELCGFNSSKPCLLVVGGSLGAGSINSCIRSALKQLTSEFQVIHLCGKGKLDSSLVGVEGYCQFEYANEELADLFAASSVVISRAGANSLYEILALGKPHILIPISSQVSRGDQIQNARYFQGLGISVVIQDELLKADVLLQALQDVMRKKDEIDNKIKALKIESATDKIVAIIKEQAHVQTPRIV</sequence>
<keyword id="KW-0131">Cell cycle</keyword>
<keyword id="KW-0132">Cell division</keyword>
<keyword id="KW-0997">Cell inner membrane</keyword>
<keyword id="KW-1003">Cell membrane</keyword>
<keyword id="KW-0133">Cell shape</keyword>
<keyword id="KW-0961">Cell wall biogenesis/degradation</keyword>
<keyword id="KW-0328">Glycosyltransferase</keyword>
<keyword id="KW-0472">Membrane</keyword>
<keyword id="KW-0573">Peptidoglycan synthesis</keyword>
<keyword id="KW-0808">Transferase</keyword>